<protein>
    <recommendedName>
        <fullName>U20-theraphotoxin-Cg1a 1</fullName>
        <shortName>U20-TRTX-Cg1a</shortName>
    </recommendedName>
    <alternativeName>
        <fullName>Jingzhaotoxin-35</fullName>
        <shortName>JZTX-35</shortName>
    </alternativeName>
    <alternativeName>
        <fullName>Peptide F3-18.97</fullName>
    </alternativeName>
</protein>
<organism>
    <name type="scientific">Chilobrachys guangxiensis</name>
    <name type="common">Chinese earth tiger tarantula</name>
    <name type="synonym">Chilobrachys jingzhao</name>
    <dbReference type="NCBI Taxonomy" id="278060"/>
    <lineage>
        <taxon>Eukaryota</taxon>
        <taxon>Metazoa</taxon>
        <taxon>Ecdysozoa</taxon>
        <taxon>Arthropoda</taxon>
        <taxon>Chelicerata</taxon>
        <taxon>Arachnida</taxon>
        <taxon>Araneae</taxon>
        <taxon>Mygalomorphae</taxon>
        <taxon>Theraphosidae</taxon>
        <taxon>Chilobrachys</taxon>
    </lineage>
</organism>
<feature type="signal peptide" evidence="2">
    <location>
        <begin position="1"/>
        <end position="21"/>
    </location>
</feature>
<feature type="propeptide" id="PRO_0000398471" evidence="3">
    <location>
        <begin position="22"/>
        <end position="47"/>
    </location>
</feature>
<feature type="peptide" id="PRO_0000398472" description="U20-theraphotoxin-Cg1a 1">
    <location>
        <begin position="48"/>
        <end position="83"/>
    </location>
</feature>
<feature type="disulfide bond" evidence="1">
    <location>
        <begin position="49"/>
        <end position="63"/>
    </location>
</feature>
<feature type="disulfide bond" evidence="1">
    <location>
        <begin position="56"/>
        <end position="68"/>
    </location>
</feature>
<feature type="disulfide bond" evidence="1">
    <location>
        <begin position="62"/>
        <end position="76"/>
    </location>
</feature>
<dbReference type="EMBL" id="EU233890">
    <property type="protein sequence ID" value="ABY71709.1"/>
    <property type="molecule type" value="mRNA"/>
</dbReference>
<dbReference type="SMR" id="B1P1F9"/>
<dbReference type="ArachnoServer" id="AS000837">
    <property type="toxin name" value="U20-theraphotoxin-Cg1a"/>
</dbReference>
<dbReference type="GO" id="GO:0005576">
    <property type="term" value="C:extracellular region"/>
    <property type="evidence" value="ECO:0007669"/>
    <property type="project" value="UniProtKB-SubCell"/>
</dbReference>
<dbReference type="GO" id="GO:0008200">
    <property type="term" value="F:ion channel inhibitor activity"/>
    <property type="evidence" value="ECO:0007669"/>
    <property type="project" value="InterPro"/>
</dbReference>
<dbReference type="GO" id="GO:0090729">
    <property type="term" value="F:toxin activity"/>
    <property type="evidence" value="ECO:0007669"/>
    <property type="project" value="UniProtKB-KW"/>
</dbReference>
<dbReference type="InterPro" id="IPR011696">
    <property type="entry name" value="Huwentoxin-1"/>
</dbReference>
<dbReference type="Pfam" id="PF07740">
    <property type="entry name" value="Toxin_12"/>
    <property type="match status" value="1"/>
</dbReference>
<dbReference type="SUPFAM" id="SSF57059">
    <property type="entry name" value="omega toxin-like"/>
    <property type="match status" value="1"/>
</dbReference>
<evidence type="ECO:0000250" key="1">
    <source>
        <dbReference type="UniProtKB" id="P0C247"/>
    </source>
</evidence>
<evidence type="ECO:0000255" key="2"/>
<evidence type="ECO:0000269" key="3">
    <source>
    </source>
</evidence>
<evidence type="ECO:0000305" key="4"/>
<accession>B1P1F9</accession>
<name>JZ35A_CHIGU</name>
<sequence length="83" mass="9461">MKVSVLITLAVLGVMFVWTSAAELEERGSDQPAWLKSLERIFQSEERDCRALYGGCTKDEDCCKHLACRRTLPTYCAWDLTFP</sequence>
<reference key="1">
    <citation type="journal article" date="2008" name="Cell. Mol. Life Sci.">
        <title>Molecular diversity and evolution of cystine knot toxins of the tarantula Chilobrachys jingzhao.</title>
        <authorList>
            <person name="Chen J."/>
            <person name="Deng M."/>
            <person name="He Q."/>
            <person name="Meng E."/>
            <person name="Jiang L."/>
            <person name="Liao Z."/>
            <person name="Rong M."/>
            <person name="Liang S."/>
        </authorList>
    </citation>
    <scope>NUCLEOTIDE SEQUENCE [LARGE SCALE MRNA]</scope>
    <source>
        <tissue>Venom gland</tissue>
    </source>
</reference>
<reference key="2">
    <citation type="journal article" date="2007" name="Proteomics">
        <title>Proteomic and peptidomic analysis of the venom from Chinese tarantula Chilobrachys jingzhao.</title>
        <authorList>
            <person name="Liao Z."/>
            <person name="Cao J."/>
            <person name="Li S."/>
            <person name="Yan X."/>
            <person name="Hu W."/>
            <person name="He Q."/>
            <person name="Chen J."/>
            <person name="Tang J."/>
            <person name="Xie J."/>
            <person name="Liang S."/>
        </authorList>
    </citation>
    <scope>PROTEIN SEQUENCE OF 48-83</scope>
    <scope>MASS SPECTROMETRY</scope>
    <source>
        <tissue>Venom</tissue>
    </source>
</reference>
<proteinExistence type="evidence at protein level"/>
<comment type="function">
    <text>Probable ion channel inhibitor.</text>
</comment>
<comment type="subcellular location">
    <subcellularLocation>
        <location>Secreted</location>
    </subcellularLocation>
</comment>
<comment type="tissue specificity">
    <text>Expressed by the venom gland.</text>
</comment>
<comment type="domain">
    <text evidence="1">The presence of a 'disulfide through disulfide knot' structurally defines this protein as a knottin.</text>
</comment>
<comment type="mass spectrometry" mass="4121.3" method="MALDI" evidence="3">
    <text>Monoisotopic mass.</text>
</comment>
<comment type="similarity">
    <text evidence="4">Belongs to the neurotoxin 10 (Hwtx-1) family. 40 (Jztx-35) subfamily.</text>
</comment>
<keyword id="KW-0903">Direct protein sequencing</keyword>
<keyword id="KW-1015">Disulfide bond</keyword>
<keyword id="KW-0872">Ion channel impairing toxin</keyword>
<keyword id="KW-0960">Knottin</keyword>
<keyword id="KW-0964">Secreted</keyword>
<keyword id="KW-0732">Signal</keyword>
<keyword id="KW-0800">Toxin</keyword>